<name>REG4_PYRFU</name>
<protein>
    <recommendedName>
        <fullName>Uncharacterized HTH-type transcriptional regulator PF0864</fullName>
    </recommendedName>
</protein>
<evidence type="ECO:0000255" key="1">
    <source>
        <dbReference type="PROSITE-ProRule" id="PRU00319"/>
    </source>
</evidence>
<evidence type="ECO:0007829" key="2">
    <source>
        <dbReference type="PDB" id="2IA0"/>
    </source>
</evidence>
<dbReference type="EMBL" id="AE009950">
    <property type="protein sequence ID" value="AAL80988.1"/>
    <property type="molecule type" value="Genomic_DNA"/>
</dbReference>
<dbReference type="RefSeq" id="WP_011011997.1">
    <property type="nucleotide sequence ID" value="NZ_CP023154.1"/>
</dbReference>
<dbReference type="PDB" id="2IA0">
    <property type="method" value="X-ray"/>
    <property type="resolution" value="2.37 A"/>
    <property type="chains" value="A/B=2-162"/>
</dbReference>
<dbReference type="PDBsum" id="2IA0"/>
<dbReference type="SMR" id="Q8U2H1"/>
<dbReference type="STRING" id="186497.PF0864"/>
<dbReference type="PaxDb" id="186497-PF0864"/>
<dbReference type="KEGG" id="pfu:PF0864"/>
<dbReference type="PATRIC" id="fig|186497.12.peg.915"/>
<dbReference type="eggNOG" id="arCOG01585">
    <property type="taxonomic scope" value="Archaea"/>
</dbReference>
<dbReference type="HOGENOM" id="CLU_091233_5_4_2"/>
<dbReference type="OrthoDB" id="6762at2157"/>
<dbReference type="PhylomeDB" id="Q8U2H1"/>
<dbReference type="EvolutionaryTrace" id="Q8U2H1"/>
<dbReference type="Proteomes" id="UP000001013">
    <property type="component" value="Chromosome"/>
</dbReference>
<dbReference type="GO" id="GO:0043565">
    <property type="term" value="F:sequence-specific DNA binding"/>
    <property type="evidence" value="ECO:0007669"/>
    <property type="project" value="InterPro"/>
</dbReference>
<dbReference type="CDD" id="cd00090">
    <property type="entry name" value="HTH_ARSR"/>
    <property type="match status" value="1"/>
</dbReference>
<dbReference type="Gene3D" id="3.30.70.920">
    <property type="match status" value="1"/>
</dbReference>
<dbReference type="Gene3D" id="1.10.10.10">
    <property type="entry name" value="Winged helix-like DNA-binding domain superfamily/Winged helix DNA-binding domain"/>
    <property type="match status" value="1"/>
</dbReference>
<dbReference type="InterPro" id="IPR011991">
    <property type="entry name" value="ArsR-like_HTH"/>
</dbReference>
<dbReference type="InterPro" id="IPR000485">
    <property type="entry name" value="AsnC-type_HTH_dom"/>
</dbReference>
<dbReference type="InterPro" id="IPR050684">
    <property type="entry name" value="HTH-Siroheme_Decarb"/>
</dbReference>
<dbReference type="InterPro" id="IPR054609">
    <property type="entry name" value="PF0864-like_C"/>
</dbReference>
<dbReference type="InterPro" id="IPR019888">
    <property type="entry name" value="Tscrpt_reg_AsnC-like"/>
</dbReference>
<dbReference type="InterPro" id="IPR036388">
    <property type="entry name" value="WH-like_DNA-bd_sf"/>
</dbReference>
<dbReference type="InterPro" id="IPR036390">
    <property type="entry name" value="WH_DNA-bd_sf"/>
</dbReference>
<dbReference type="PANTHER" id="PTHR43413:SF7">
    <property type="entry name" value="HTH-TYPE TRANSCRIPTIONAL REGULATOR PTR2"/>
    <property type="match status" value="1"/>
</dbReference>
<dbReference type="PANTHER" id="PTHR43413">
    <property type="entry name" value="TRANSCRIPTIONAL REGULATOR, ASNC FAMILY"/>
    <property type="match status" value="1"/>
</dbReference>
<dbReference type="Pfam" id="PF22482">
    <property type="entry name" value="AsnC_trans_reg_3"/>
    <property type="match status" value="1"/>
</dbReference>
<dbReference type="Pfam" id="PF13412">
    <property type="entry name" value="HTH_24"/>
    <property type="match status" value="1"/>
</dbReference>
<dbReference type="PRINTS" id="PR00033">
    <property type="entry name" value="HTHASNC"/>
</dbReference>
<dbReference type="SMART" id="SM00344">
    <property type="entry name" value="HTH_ASNC"/>
    <property type="match status" value="1"/>
</dbReference>
<dbReference type="SUPFAM" id="SSF46785">
    <property type="entry name" value="Winged helix' DNA-binding domain"/>
    <property type="match status" value="1"/>
</dbReference>
<dbReference type="PROSITE" id="PS50956">
    <property type="entry name" value="HTH_ASNC_2"/>
    <property type="match status" value="1"/>
</dbReference>
<reference key="1">
    <citation type="journal article" date="1999" name="Genetics">
        <title>Divergence of the hyperthermophilic archaea Pyrococcus furiosus and P. horikoshii inferred from complete genomic sequences.</title>
        <authorList>
            <person name="Maeder D.L."/>
            <person name="Weiss R.B."/>
            <person name="Dunn D.M."/>
            <person name="Cherry J.L."/>
            <person name="Gonzalez J.M."/>
            <person name="DiRuggiero J."/>
            <person name="Robb F.T."/>
        </authorList>
    </citation>
    <scope>NUCLEOTIDE SEQUENCE [LARGE SCALE GENOMIC DNA]</scope>
    <source>
        <strain>ATCC 43587 / DSM 3638 / JCM 8422 / Vc1</strain>
    </source>
</reference>
<organism>
    <name type="scientific">Pyrococcus furiosus (strain ATCC 43587 / DSM 3638 / JCM 8422 / Vc1)</name>
    <dbReference type="NCBI Taxonomy" id="186497"/>
    <lineage>
        <taxon>Archaea</taxon>
        <taxon>Methanobacteriati</taxon>
        <taxon>Methanobacteriota</taxon>
        <taxon>Thermococci</taxon>
        <taxon>Thermococcales</taxon>
        <taxon>Thermococcaceae</taxon>
        <taxon>Pyrococcus</taxon>
    </lineage>
</organism>
<keyword id="KW-0002">3D-structure</keyword>
<keyword id="KW-0238">DNA-binding</keyword>
<keyword id="KW-1185">Reference proteome</keyword>
<keyword id="KW-0804">Transcription</keyword>
<keyword id="KW-0805">Transcription regulation</keyword>
<sequence>MSEIHLDDLDRNILRLLKKDARLTISELSEQLKKPESTIHFRIKKLQERGVIERYTIILGEQLKPKHLALIVLEVGKPVIEDFLERYISYISSTLSALPGVLFVAKSGEDKIIALVGKNNKDELVKFIEENITSIPNLKHIQIFPITEIKKGEDLTGFLAEV</sequence>
<proteinExistence type="evidence at protein level"/>
<feature type="chain" id="PRO_0000111764" description="Uncharacterized HTH-type transcriptional regulator PF0864">
    <location>
        <begin position="1"/>
        <end position="162"/>
    </location>
</feature>
<feature type="domain" description="HTH asnC-type" evidence="1">
    <location>
        <begin position="6"/>
        <end position="78"/>
    </location>
</feature>
<feature type="DNA-binding region" description="H-T-H motif" evidence="1">
    <location>
        <begin position="25"/>
        <end position="44"/>
    </location>
</feature>
<feature type="helix" evidence="2">
    <location>
        <begin position="8"/>
        <end position="19"/>
    </location>
</feature>
<feature type="helix" evidence="2">
    <location>
        <begin position="25"/>
        <end position="32"/>
    </location>
</feature>
<feature type="helix" evidence="2">
    <location>
        <begin position="36"/>
        <end position="48"/>
    </location>
</feature>
<feature type="strand" evidence="2">
    <location>
        <begin position="51"/>
        <end position="59"/>
    </location>
</feature>
<feature type="turn" evidence="2">
    <location>
        <begin position="61"/>
        <end position="63"/>
    </location>
</feature>
<feature type="strand" evidence="2">
    <location>
        <begin position="66"/>
        <end position="76"/>
    </location>
</feature>
<feature type="helix" evidence="2">
    <location>
        <begin position="82"/>
        <end position="96"/>
    </location>
</feature>
<feature type="strand" evidence="2">
    <location>
        <begin position="101"/>
        <end position="107"/>
    </location>
</feature>
<feature type="turn" evidence="2">
    <location>
        <begin position="108"/>
        <end position="110"/>
    </location>
</feature>
<feature type="strand" evidence="2">
    <location>
        <begin position="111"/>
        <end position="120"/>
    </location>
</feature>
<feature type="helix" evidence="2">
    <location>
        <begin position="123"/>
        <end position="131"/>
    </location>
</feature>
<feature type="turn" evidence="2">
    <location>
        <begin position="132"/>
        <end position="134"/>
    </location>
</feature>
<feature type="strand" evidence="2">
    <location>
        <begin position="138"/>
        <end position="145"/>
    </location>
</feature>
<feature type="strand" evidence="2">
    <location>
        <begin position="148"/>
        <end position="151"/>
    </location>
</feature>
<feature type="helix" evidence="2">
    <location>
        <begin position="155"/>
        <end position="159"/>
    </location>
</feature>
<accession>Q8U2H1</accession>
<gene>
    <name type="ordered locus">PF0864</name>
</gene>